<organism>
    <name type="scientific">Rhodospirillum rubrum (strain ATCC 11170 / ATH 1.1.1 / DSM 467 / LMG 4362 / NCIMB 8255 / S1)</name>
    <dbReference type="NCBI Taxonomy" id="269796"/>
    <lineage>
        <taxon>Bacteria</taxon>
        <taxon>Pseudomonadati</taxon>
        <taxon>Pseudomonadota</taxon>
        <taxon>Alphaproteobacteria</taxon>
        <taxon>Rhodospirillales</taxon>
        <taxon>Rhodospirillaceae</taxon>
        <taxon>Rhodospirillum</taxon>
    </lineage>
</organism>
<evidence type="ECO:0000255" key="1">
    <source>
        <dbReference type="HAMAP-Rule" id="MF_00340"/>
    </source>
</evidence>
<evidence type="ECO:0000256" key="2">
    <source>
        <dbReference type="SAM" id="MobiDB-lite"/>
    </source>
</evidence>
<evidence type="ECO:0000305" key="3"/>
<comment type="similarity">
    <text evidence="1">Belongs to the bacterial ribosomal protein bL32 family.</text>
</comment>
<gene>
    <name evidence="1" type="primary">rpmF</name>
    <name type="ordered locus">Rru_A1665</name>
</gene>
<sequence>MAVPKKKTSKSRRDMRRSHHALKPSAYGECPNCGELKRPHHVCTSCGHYDGREVVSEDVAA</sequence>
<accession>Q2RTT0</accession>
<name>RL32_RHORT</name>
<proteinExistence type="inferred from homology"/>
<protein>
    <recommendedName>
        <fullName evidence="1">Large ribosomal subunit protein bL32</fullName>
    </recommendedName>
    <alternativeName>
        <fullName evidence="3">50S ribosomal protein L32</fullName>
    </alternativeName>
</protein>
<reference key="1">
    <citation type="journal article" date="2011" name="Stand. Genomic Sci.">
        <title>Complete genome sequence of Rhodospirillum rubrum type strain (S1).</title>
        <authorList>
            <person name="Munk A.C."/>
            <person name="Copeland A."/>
            <person name="Lucas S."/>
            <person name="Lapidus A."/>
            <person name="Del Rio T.G."/>
            <person name="Barry K."/>
            <person name="Detter J.C."/>
            <person name="Hammon N."/>
            <person name="Israni S."/>
            <person name="Pitluck S."/>
            <person name="Brettin T."/>
            <person name="Bruce D."/>
            <person name="Han C."/>
            <person name="Tapia R."/>
            <person name="Gilna P."/>
            <person name="Schmutz J."/>
            <person name="Larimer F."/>
            <person name="Land M."/>
            <person name="Kyrpides N.C."/>
            <person name="Mavromatis K."/>
            <person name="Richardson P."/>
            <person name="Rohde M."/>
            <person name="Goeker M."/>
            <person name="Klenk H.P."/>
            <person name="Zhang Y."/>
            <person name="Roberts G.P."/>
            <person name="Reslewic S."/>
            <person name="Schwartz D.C."/>
        </authorList>
    </citation>
    <scope>NUCLEOTIDE SEQUENCE [LARGE SCALE GENOMIC DNA]</scope>
    <source>
        <strain>ATCC 11170 / ATH 1.1.1 / DSM 467 / LMG 4362 / NCIMB 8255 / S1</strain>
    </source>
</reference>
<keyword id="KW-1185">Reference proteome</keyword>
<keyword id="KW-0687">Ribonucleoprotein</keyword>
<keyword id="KW-0689">Ribosomal protein</keyword>
<dbReference type="EMBL" id="CP000230">
    <property type="protein sequence ID" value="ABC22465.1"/>
    <property type="molecule type" value="Genomic_DNA"/>
</dbReference>
<dbReference type="RefSeq" id="WP_011389355.1">
    <property type="nucleotide sequence ID" value="NC_007643.1"/>
</dbReference>
<dbReference type="RefSeq" id="YP_426752.1">
    <property type="nucleotide sequence ID" value="NC_007643.1"/>
</dbReference>
<dbReference type="SMR" id="Q2RTT0"/>
<dbReference type="STRING" id="269796.Rru_A1665"/>
<dbReference type="EnsemblBacteria" id="ABC22465">
    <property type="protein sequence ID" value="ABC22465"/>
    <property type="gene ID" value="Rru_A1665"/>
</dbReference>
<dbReference type="KEGG" id="rru:Rru_A1665"/>
<dbReference type="PATRIC" id="fig|269796.9.peg.1743"/>
<dbReference type="eggNOG" id="COG0333">
    <property type="taxonomic scope" value="Bacteria"/>
</dbReference>
<dbReference type="HOGENOM" id="CLU_129084_1_3_5"/>
<dbReference type="PhylomeDB" id="Q2RTT0"/>
<dbReference type="Proteomes" id="UP000001929">
    <property type="component" value="Chromosome"/>
</dbReference>
<dbReference type="GO" id="GO:0015934">
    <property type="term" value="C:large ribosomal subunit"/>
    <property type="evidence" value="ECO:0007669"/>
    <property type="project" value="InterPro"/>
</dbReference>
<dbReference type="GO" id="GO:0003735">
    <property type="term" value="F:structural constituent of ribosome"/>
    <property type="evidence" value="ECO:0007669"/>
    <property type="project" value="InterPro"/>
</dbReference>
<dbReference type="GO" id="GO:0006412">
    <property type="term" value="P:translation"/>
    <property type="evidence" value="ECO:0007669"/>
    <property type="project" value="UniProtKB-UniRule"/>
</dbReference>
<dbReference type="FunFam" id="1.20.5.640:FF:000001">
    <property type="entry name" value="50S ribosomal protein L32"/>
    <property type="match status" value="1"/>
</dbReference>
<dbReference type="Gene3D" id="1.20.5.640">
    <property type="entry name" value="Single helix bin"/>
    <property type="match status" value="1"/>
</dbReference>
<dbReference type="HAMAP" id="MF_00340">
    <property type="entry name" value="Ribosomal_bL32"/>
    <property type="match status" value="1"/>
</dbReference>
<dbReference type="InterPro" id="IPR002677">
    <property type="entry name" value="Ribosomal_bL32"/>
</dbReference>
<dbReference type="InterPro" id="IPR044957">
    <property type="entry name" value="Ribosomal_bL32_bact"/>
</dbReference>
<dbReference type="InterPro" id="IPR011332">
    <property type="entry name" value="Ribosomal_zn-bd"/>
</dbReference>
<dbReference type="NCBIfam" id="TIGR01031">
    <property type="entry name" value="rpmF_bact"/>
    <property type="match status" value="1"/>
</dbReference>
<dbReference type="PANTHER" id="PTHR35534">
    <property type="entry name" value="50S RIBOSOMAL PROTEIN L32"/>
    <property type="match status" value="1"/>
</dbReference>
<dbReference type="PANTHER" id="PTHR35534:SF1">
    <property type="entry name" value="LARGE RIBOSOMAL SUBUNIT PROTEIN BL32"/>
    <property type="match status" value="1"/>
</dbReference>
<dbReference type="Pfam" id="PF01783">
    <property type="entry name" value="Ribosomal_L32p"/>
    <property type="match status" value="1"/>
</dbReference>
<dbReference type="SUPFAM" id="SSF57829">
    <property type="entry name" value="Zn-binding ribosomal proteins"/>
    <property type="match status" value="1"/>
</dbReference>
<feature type="chain" id="PRO_0000296550" description="Large ribosomal subunit protein bL32">
    <location>
        <begin position="1"/>
        <end position="61"/>
    </location>
</feature>
<feature type="region of interest" description="Disordered" evidence="2">
    <location>
        <begin position="1"/>
        <end position="27"/>
    </location>
</feature>
<feature type="compositionally biased region" description="Basic residues" evidence="2">
    <location>
        <begin position="1"/>
        <end position="22"/>
    </location>
</feature>